<organism>
    <name type="scientific">Variola virus</name>
    <dbReference type="NCBI Taxonomy" id="10255"/>
    <lineage>
        <taxon>Viruses</taxon>
        <taxon>Varidnaviria</taxon>
        <taxon>Bamfordvirae</taxon>
        <taxon>Nucleocytoviricota</taxon>
        <taxon>Pokkesviricetes</taxon>
        <taxon>Chitovirales</taxon>
        <taxon>Poxviridae</taxon>
        <taxon>Chordopoxvirinae</taxon>
        <taxon>Orthopoxvirus</taxon>
    </lineage>
</organism>
<comment type="function">
    <text evidence="1">Inhibits host immune defense by binding to host TNF and various chemokines in the extracellular space. Binds host CC chemokines (beta chemokines) and CXC chemokines (alpha chemokines).</text>
</comment>
<comment type="subunit">
    <text evidence="1">Homodimer. Interacts with host TNF, LTA, CCL28, CCL25, CXCL12, CXCL13 and CXCl14.</text>
</comment>
<comment type="subcellular location">
    <subcellularLocation>
        <location evidence="1">Secreted</location>
    </subcellularLocation>
</comment>
<comment type="induction">
    <text evidence="2">Expressed in the early phase of the viral replicative cycle.</text>
</comment>
<comment type="domain">
    <text evidence="1">The N-terminal region is similar to host TNF receptor 2/TNFRSF1B and binds host TNF. The C-terminal region is called smallpox virus-encoded chemokine receptor (SECRET), and binds host cytokines.</text>
</comment>
<comment type="similarity">
    <text evidence="5">Belongs to the orthopoxvirus OPG002 family.</text>
</comment>
<evidence type="ECO:0000250" key="1">
    <source>
        <dbReference type="UniProtKB" id="P0DSV7"/>
    </source>
</evidence>
<evidence type="ECO:0000250" key="2">
    <source>
        <dbReference type="UniProtKB" id="Q76ZJ3"/>
    </source>
</evidence>
<evidence type="ECO:0000255" key="3"/>
<evidence type="ECO:0000255" key="4">
    <source>
        <dbReference type="PROSITE-ProRule" id="PRU00206"/>
    </source>
</evidence>
<evidence type="ECO:0000305" key="5"/>
<keyword id="KW-1015">Disulfide bond</keyword>
<keyword id="KW-0325">Glycoprotein</keyword>
<keyword id="KW-0945">Host-virus interaction</keyword>
<keyword id="KW-1086">Inhibition of host chemokines by virus</keyword>
<keyword id="KW-0677">Repeat</keyword>
<keyword id="KW-0964">Secreted</keyword>
<keyword id="KW-0732">Signal</keyword>
<keyword id="KW-0899">Viral immunoevasion</keyword>
<protein>
    <recommendedName>
        <fullName>Cytokine response-modifying protein B</fullName>
        <shortName>CrmB</shortName>
    </recommendedName>
    <alternativeName>
        <fullName>Viral tumor necrosis factor receptor II</fullName>
        <shortName>vTNFR</shortName>
    </alternativeName>
</protein>
<reference key="1">
    <citation type="journal article" date="1993" name="Nature">
        <title>Potential virulence determinants in terminal regions of variola smallpox virus genome.</title>
        <authorList>
            <person name="Massung R.F."/>
            <person name="Esposito J.J."/>
            <person name="Liu L.I."/>
            <person name="Qi J."/>
            <person name="Utterback T.R."/>
            <person name="Knight J.C."/>
            <person name="Aubin L."/>
            <person name="Yuran T.E."/>
            <person name="Parsons J.M."/>
            <person name="Loparev V.N."/>
            <person name="Selivanov N.A."/>
            <person name="Cavallaro K.F."/>
            <person name="Kerlavage A.R."/>
            <person name="Mahy B.W.J."/>
            <person name="Venter J.C."/>
        </authorList>
    </citation>
    <scope>NUCLEOTIDE SEQUENCE [GENOMIC DNA]</scope>
    <source>
        <strain>Bangladesh-1975</strain>
    </source>
</reference>
<reference key="2">
    <citation type="submission" date="1995-07" db="EMBL/GenBank/DDBJ databases">
        <authorList>
            <person name="Massung R.F."/>
            <person name="Loparev V.N."/>
            <person name="Knight J.C."/>
            <person name="Chizhikov V.E."/>
            <person name="Parsons J.M."/>
            <person name="Totmenin A.V."/>
            <person name="Shchelkunov S.N."/>
            <person name="Esposito J.J."/>
        </authorList>
    </citation>
    <scope>NUCLEOTIDE SEQUENCE [GENOMIC DNA]</scope>
    <source>
        <strain>Garcia-1966</strain>
        <strain>Somalia-1977</strain>
    </source>
</reference>
<reference key="3">
    <citation type="journal article" date="2000" name="Virology">
        <title>Alastrim smallpox variola minor virus genome DNA sequences.</title>
        <authorList>
            <person name="Shchelkunov S.N."/>
            <person name="Totmenin A.V."/>
            <person name="Loparev V.N."/>
            <person name="Safronov P.F."/>
            <person name="Gutorov V.V."/>
            <person name="Chizhikov V.E."/>
            <person name="Knight J.C."/>
            <person name="Parsons J.M."/>
            <person name="Massung R.F."/>
            <person name="Esposito J.J."/>
        </authorList>
    </citation>
    <scope>NUCLEOTIDE SEQUENCE [LARGE SCALE GENOMIC DNA]</scope>
    <source>
        <strain>Garcia-1966</strain>
    </source>
</reference>
<reference key="4">
    <citation type="submission" date="1998-01" db="EMBL/GenBank/DDBJ databases">
        <title>DNA sequence analysis as a criterion for allocation of the orthopoxviruses to a particular species.</title>
        <authorList>
            <person name="Loparev V.N."/>
            <person name="Parsons J.M."/>
            <person name="Esposito J.J."/>
        </authorList>
    </citation>
    <scope>NUCLEOTIDE SEQUENCE [GENOMIC DNA]</scope>
    <source>
        <strain>Butler-1952</strain>
        <strain>Chimp 9-4</strain>
        <strain>Garcia-1966</strain>
        <strain>Somalia-1977</strain>
    </source>
</reference>
<gene>
    <name type="primary">OPG002</name>
    <name type="ORF">G2R</name>
    <name type="ORF">G4R</name>
</gene>
<sequence length="349" mass="38189">MKSVLYLYILFLSCIIINGRDAAPYTPPNGKCKDTEYKRHNLCCLSCPPGTYASRLCDSKTNTQCTPCGSGTFTSRNNHLPACLSCNGRCNSNQVETRSCNTTHNRICECSPGYYCLLKGSSGCKACVSQTKCGIGYGVSGHTSVGDVICSPCGFGTYSHTVSSADKCEPVPNNTFNYIDVEITLYPVNDTSCTRTTTTGLSESILTSELTITMNHTDCNPVFREEYFSVLNKVATSGFFTGENRYQNISKVCTLNFEIKCNNKGSSFKQLTKAKNDDGMMSHSETVTLAGDCLSSVDIYILYSNTNAQDYETDTISYRVGNVLDDDSHMPGSCNIHKPITNSKPTRFL</sequence>
<organismHost>
    <name type="scientific">Homo sapiens</name>
    <name type="common">Human</name>
    <dbReference type="NCBI Taxonomy" id="9606"/>
</organismHost>
<accession>P0DSV8</accession>
<accession>P34015</accession>
<accession>Q85407</accession>
<accession>Q89098</accession>
<accession>Q89118</accession>
<name>CRMB_VARV</name>
<proteinExistence type="inferred from homology"/>
<feature type="signal peptide" evidence="3">
    <location>
        <begin position="1"/>
        <end position="22"/>
    </location>
</feature>
<feature type="chain" id="PRO_0000448128" description="Cytokine response-modifying protein B">
    <location>
        <begin position="23"/>
        <end position="349"/>
    </location>
</feature>
<feature type="repeat" description="TNFR-Cys 1">
    <location>
        <begin position="31"/>
        <end position="66"/>
    </location>
</feature>
<feature type="repeat" description="TNFR-Cys 2">
    <location>
        <begin position="67"/>
        <end position="108"/>
    </location>
</feature>
<feature type="region of interest" description="TNF-binding">
    <location>
        <begin position="1"/>
        <end position="160"/>
    </location>
</feature>
<feature type="region of interest" description="Chemokine-binding">
    <location>
        <begin position="161"/>
        <end position="349"/>
    </location>
</feature>
<feature type="glycosylation site" description="N-linked (GlcNAc...) asparagine; by host" evidence="3">
    <location>
        <position position="101"/>
    </location>
</feature>
<feature type="glycosylation site" description="N-linked (GlcNAc...) asparagine; by host" evidence="3">
    <location>
        <position position="173"/>
    </location>
</feature>
<feature type="glycosylation site" description="N-linked (GlcNAc...) asparagine; by host" evidence="3">
    <location>
        <position position="189"/>
    </location>
</feature>
<feature type="glycosylation site" description="N-linked (GlcNAc...) asparagine; by host" evidence="3">
    <location>
        <position position="215"/>
    </location>
</feature>
<feature type="glycosylation site" description="N-linked (GlcNAc...) asparagine; by host" evidence="3">
    <location>
        <position position="248"/>
    </location>
</feature>
<feature type="disulfide bond" evidence="4">
    <location>
        <begin position="32"/>
        <end position="43"/>
    </location>
</feature>
<feature type="disulfide bond" evidence="4">
    <location>
        <begin position="44"/>
        <end position="57"/>
    </location>
</feature>
<feature type="disulfide bond" evidence="4">
    <location>
        <begin position="47"/>
        <end position="65"/>
    </location>
</feature>
<feature type="disulfide bond" evidence="4">
    <location>
        <begin position="68"/>
        <end position="83"/>
    </location>
</feature>
<feature type="disulfide bond" evidence="4">
    <location>
        <begin position="86"/>
        <end position="100"/>
    </location>
</feature>
<feature type="disulfide bond" evidence="4">
    <location>
        <begin position="90"/>
        <end position="108"/>
    </location>
</feature>
<feature type="sequence variant" description="In strain: Bangladesh-1975 and Chimp 9-4.">
    <location>
        <position position="17"/>
    </location>
</feature>
<feature type="sequence variant" description="In strain: Butler-1952, Garcia-1966 and Somalia-1977.">
    <original>H</original>
    <variation>Y</variation>
    <location>
        <position position="160"/>
    </location>
</feature>
<feature type="sequence variant" description="In strain: Butler-1952 and Garcia-1966.">
    <original>A</original>
    <variation>T</variation>
    <location>
        <position position="165"/>
    </location>
</feature>
<feature type="sequence variant" description="In strain: Somalia-1977.">
    <original>E</original>
    <variation>K</variation>
    <location>
        <position position="182"/>
    </location>
</feature>
<feature type="sequence variant" description="In strain: Somalia-1977.">
    <original>A</original>
    <variation>E</variation>
    <location>
        <position position="274"/>
    </location>
</feature>
<feature type="sequence variant" description="In strain: Butler-1952 and Garcia-1966.">
    <original>N</original>
    <variation>D</variation>
    <location>
        <position position="335"/>
    </location>
</feature>
<feature type="sequence variant" description="In strain: Butler-1952 and Garcia-1966.">
    <original>P</original>
    <variation>L</variation>
    <location>
        <position position="339"/>
    </location>
</feature>
<dbReference type="EMBL" id="L22579">
    <property type="protein sequence ID" value="AAA60933.1"/>
    <property type="molecule type" value="Genomic_DNA"/>
</dbReference>
<dbReference type="EMBL" id="U18339">
    <property type="protein sequence ID" value="AAA69407.1"/>
    <property type="molecule type" value="Genomic_DNA"/>
</dbReference>
<dbReference type="EMBL" id="U18341">
    <property type="protein sequence ID" value="AAA69467.1"/>
    <property type="molecule type" value="Genomic_DNA"/>
</dbReference>
<dbReference type="EMBL" id="Y16780">
    <property type="protein sequence ID" value="CAB54798.1"/>
    <property type="molecule type" value="Genomic_DNA"/>
</dbReference>
<dbReference type="EMBL" id="U88146">
    <property type="protein sequence ID" value="AAB94371.1"/>
    <property type="molecule type" value="Genomic_DNA"/>
</dbReference>
<dbReference type="EMBL" id="U88148">
    <property type="protein sequence ID" value="AAB94373.1"/>
    <property type="molecule type" value="Genomic_DNA"/>
</dbReference>
<dbReference type="EMBL" id="U88149">
    <property type="protein sequence ID" value="AAB94374.1"/>
    <property type="molecule type" value="Genomic_DNA"/>
</dbReference>
<dbReference type="EMBL" id="U88152">
    <property type="protein sequence ID" value="AAB94377.1"/>
    <property type="molecule type" value="Genomic_DNA"/>
</dbReference>
<dbReference type="PIR" id="D36858">
    <property type="entry name" value="D36858"/>
</dbReference>
<dbReference type="PIR" id="T28623">
    <property type="entry name" value="T28623"/>
</dbReference>
<dbReference type="RefSeq" id="NP_042240.1">
    <property type="nucleotide sequence ID" value="NC_001611.1"/>
</dbReference>
<dbReference type="SMR" id="P0DSV8"/>
<dbReference type="DIP" id="DIP-61146N"/>
<dbReference type="GlyCosmos" id="P0DSV8">
    <property type="glycosylation" value="5 sites, No reported glycans"/>
</dbReference>
<dbReference type="GeneID" id="1486427"/>
<dbReference type="KEGG" id="vg:1486427"/>
<dbReference type="Proteomes" id="UP000111493">
    <property type="component" value="Segment"/>
</dbReference>
<dbReference type="Proteomes" id="UP000119805">
    <property type="component" value="Segment"/>
</dbReference>
<dbReference type="GO" id="GO:0005576">
    <property type="term" value="C:extracellular region"/>
    <property type="evidence" value="ECO:0007669"/>
    <property type="project" value="UniProtKB-SubCell"/>
</dbReference>
<dbReference type="GO" id="GO:0043120">
    <property type="term" value="F:tumor necrosis factor binding"/>
    <property type="evidence" value="ECO:0007669"/>
    <property type="project" value="TreeGrafter"/>
</dbReference>
<dbReference type="GO" id="GO:0005031">
    <property type="term" value="F:tumor necrosis factor receptor activity"/>
    <property type="evidence" value="ECO:0007669"/>
    <property type="project" value="InterPro"/>
</dbReference>
<dbReference type="GO" id="GO:0051044">
    <property type="term" value="P:positive regulation of membrane protein ectodomain proteolysis"/>
    <property type="evidence" value="ECO:0007669"/>
    <property type="project" value="TreeGrafter"/>
</dbReference>
<dbReference type="GO" id="GO:0042129">
    <property type="term" value="P:regulation of T cell proliferation"/>
    <property type="evidence" value="ECO:0007669"/>
    <property type="project" value="TreeGrafter"/>
</dbReference>
<dbReference type="GO" id="GO:0052031">
    <property type="term" value="P:symbiont-mediated perturbation of host defense response"/>
    <property type="evidence" value="ECO:0007669"/>
    <property type="project" value="InterPro"/>
</dbReference>
<dbReference type="CDD" id="cd15839">
    <property type="entry name" value="TNFRSF_viral"/>
    <property type="match status" value="1"/>
</dbReference>
<dbReference type="Gene3D" id="2.60.240.20">
    <property type="match status" value="1"/>
</dbReference>
<dbReference type="Gene3D" id="2.10.50.10">
    <property type="entry name" value="Tumor Necrosis Factor Receptor, subunit A, domain 2"/>
    <property type="match status" value="2"/>
</dbReference>
<dbReference type="InterPro" id="IPR010806">
    <property type="entry name" value="Poxvirus_TNF-rcpt-II_C"/>
</dbReference>
<dbReference type="InterPro" id="IPR011172">
    <property type="entry name" value="Poxvirus_TNF_rcpt-II"/>
</dbReference>
<dbReference type="InterPro" id="IPR051670">
    <property type="entry name" value="TNF_chemokine_rcpt-like"/>
</dbReference>
<dbReference type="InterPro" id="IPR001368">
    <property type="entry name" value="TNFR/NGFR_Cys_rich_reg"/>
</dbReference>
<dbReference type="InterPro" id="IPR034059">
    <property type="entry name" value="TNFRSF_N_viral"/>
</dbReference>
<dbReference type="PANTHER" id="PTHR47386">
    <property type="entry name" value="TUMOR NECROSIS FACTOR RECEPTOR SUPERFAMILY MEMBER 1B"/>
    <property type="match status" value="1"/>
</dbReference>
<dbReference type="PANTHER" id="PTHR47386:SF1">
    <property type="entry name" value="TUMOR NECROSIS FACTOR RECEPTOR SUPERFAMILY MEMBER 1B"/>
    <property type="match status" value="1"/>
</dbReference>
<dbReference type="Pfam" id="PF07190">
    <property type="entry name" value="CrmD_SECRET"/>
    <property type="match status" value="1"/>
</dbReference>
<dbReference type="Pfam" id="PF00020">
    <property type="entry name" value="TNFR_c6"/>
    <property type="match status" value="1"/>
</dbReference>
<dbReference type="PIRSF" id="PIRSF001790">
    <property type="entry name" value="TNF_C22L"/>
    <property type="match status" value="1"/>
</dbReference>
<dbReference type="SMART" id="SM00208">
    <property type="entry name" value="TNFR"/>
    <property type="match status" value="3"/>
</dbReference>
<dbReference type="SUPFAM" id="SSF57586">
    <property type="entry name" value="TNF receptor-like"/>
    <property type="match status" value="2"/>
</dbReference>
<dbReference type="PROSITE" id="PS00652">
    <property type="entry name" value="TNFR_NGFR_1"/>
    <property type="match status" value="2"/>
</dbReference>
<dbReference type="PROSITE" id="PS50050">
    <property type="entry name" value="TNFR_NGFR_2"/>
    <property type="match status" value="2"/>
</dbReference>